<feature type="chain" id="PRO_0000232076" description="Phenylalanine--tRNA ligase beta subunit">
    <location>
        <begin position="1"/>
        <end position="792"/>
    </location>
</feature>
<feature type="domain" description="tRNA-binding" evidence="1">
    <location>
        <begin position="39"/>
        <end position="147"/>
    </location>
</feature>
<feature type="domain" description="B5" evidence="1">
    <location>
        <begin position="400"/>
        <end position="476"/>
    </location>
</feature>
<feature type="domain" description="FDX-ACB" evidence="1">
    <location>
        <begin position="698"/>
        <end position="791"/>
    </location>
</feature>
<feature type="binding site" evidence="1">
    <location>
        <position position="454"/>
    </location>
    <ligand>
        <name>Mg(2+)</name>
        <dbReference type="ChEBI" id="CHEBI:18420"/>
        <note>shared with alpha subunit</note>
    </ligand>
</feature>
<feature type="binding site" evidence="1">
    <location>
        <position position="460"/>
    </location>
    <ligand>
        <name>Mg(2+)</name>
        <dbReference type="ChEBI" id="CHEBI:18420"/>
        <note>shared with alpha subunit</note>
    </ligand>
</feature>
<feature type="binding site" evidence="1">
    <location>
        <position position="463"/>
    </location>
    <ligand>
        <name>Mg(2+)</name>
        <dbReference type="ChEBI" id="CHEBI:18420"/>
        <note>shared with alpha subunit</note>
    </ligand>
</feature>
<feature type="binding site" evidence="1">
    <location>
        <position position="464"/>
    </location>
    <ligand>
        <name>Mg(2+)</name>
        <dbReference type="ChEBI" id="CHEBI:18420"/>
        <note>shared with alpha subunit</note>
    </ligand>
</feature>
<sequence length="792" mass="86706">MKFSEQWLRGWVSPQVSRDELVARLSMAGLEVDSVTPAAGDFSGVVVGEVLSTEQHPDADKLRVCQVSNGSETFQVVCGAPNVRPGLKVPFAMIGAQLPGDFKIKKAKLRGVESNGMLCSQAELQIGEGNDGLMELPVDAPVGEDVRTYLSLDDASIEVDLTPNRGDCLSLAGMAREVGALYAAKVQRPEVPAIPAAHDEVRPVEVLAPAACPRYLGRVVRNVDLSKPTPLWMVERLRRADVRSIDAAVDITNYVMLELGQPLHAFDLAEINGGIRVRMAEEGEKLVLLDGQEVTLRSDTLVIADHTRALAIAGVMGGEHSGVTANTRDVFLESAFFDQIAVAGKARSYGLHTDASHRYERGVDWQLAREAMERATGLLLEITGGDAGPIIETLSEQHLPSVAPVTLRAERITQMLGMEIDGLEVERLLTALGLTVTADGAGQWRVEVPSHRFDISLEVDLIEELARLYGYNRLPVRYPQARLAPQAKAEAEGDLPALRRLLVARGYQEAITYSFIDPKLFELFNPGVEPLLLANPISADMAVMRSSLWPGLVKALQHNLNRQQDRVRMFESGLRFVGQLEGLKQQPMLAGVVCGSRLPEGWAQGRDGVDFFDVKADVEAVLGFAGALDAFTFVPGKHPALHPGQTARIERDGREVGFLGAIHPELAKNLGLDRPVYVFELVLSEVAQGRLPKFHELSRFPEVRRDLALLADRDVAASSVLDVIRENAGEWLTDLRLFDVYQGKGIDPHRKSLAVGLTWQHPSRTLNDDEVNSTTQNILTSLEQRLNATLRK</sequence>
<keyword id="KW-0030">Aminoacyl-tRNA synthetase</keyword>
<keyword id="KW-0067">ATP-binding</keyword>
<keyword id="KW-0963">Cytoplasm</keyword>
<keyword id="KW-0436">Ligase</keyword>
<keyword id="KW-0460">Magnesium</keyword>
<keyword id="KW-0479">Metal-binding</keyword>
<keyword id="KW-0547">Nucleotide-binding</keyword>
<keyword id="KW-0648">Protein biosynthesis</keyword>
<keyword id="KW-0694">RNA-binding</keyword>
<keyword id="KW-0820">tRNA-binding</keyword>
<protein>
    <recommendedName>
        <fullName evidence="1">Phenylalanine--tRNA ligase beta subunit</fullName>
        <ecNumber evidence="1">6.1.1.20</ecNumber>
    </recommendedName>
    <alternativeName>
        <fullName evidence="1">Phenylalanyl-tRNA synthetase beta subunit</fullName>
        <shortName evidence="1">PheRS</shortName>
    </alternativeName>
</protein>
<accession>Q4KEV9</accession>
<organism>
    <name type="scientific">Pseudomonas fluorescens (strain ATCC BAA-477 / NRRL B-23932 / Pf-5)</name>
    <dbReference type="NCBI Taxonomy" id="220664"/>
    <lineage>
        <taxon>Bacteria</taxon>
        <taxon>Pseudomonadati</taxon>
        <taxon>Pseudomonadota</taxon>
        <taxon>Gammaproteobacteria</taxon>
        <taxon>Pseudomonadales</taxon>
        <taxon>Pseudomonadaceae</taxon>
        <taxon>Pseudomonas</taxon>
    </lineage>
</organism>
<comment type="catalytic activity">
    <reaction evidence="1">
        <text>tRNA(Phe) + L-phenylalanine + ATP = L-phenylalanyl-tRNA(Phe) + AMP + diphosphate + H(+)</text>
        <dbReference type="Rhea" id="RHEA:19413"/>
        <dbReference type="Rhea" id="RHEA-COMP:9668"/>
        <dbReference type="Rhea" id="RHEA-COMP:9699"/>
        <dbReference type="ChEBI" id="CHEBI:15378"/>
        <dbReference type="ChEBI" id="CHEBI:30616"/>
        <dbReference type="ChEBI" id="CHEBI:33019"/>
        <dbReference type="ChEBI" id="CHEBI:58095"/>
        <dbReference type="ChEBI" id="CHEBI:78442"/>
        <dbReference type="ChEBI" id="CHEBI:78531"/>
        <dbReference type="ChEBI" id="CHEBI:456215"/>
        <dbReference type="EC" id="6.1.1.20"/>
    </reaction>
</comment>
<comment type="cofactor">
    <cofactor evidence="1">
        <name>Mg(2+)</name>
        <dbReference type="ChEBI" id="CHEBI:18420"/>
    </cofactor>
    <text evidence="1">Binds 2 magnesium ions per tetramer.</text>
</comment>
<comment type="subunit">
    <text evidence="1">Tetramer of two alpha and two beta subunits.</text>
</comment>
<comment type="subcellular location">
    <subcellularLocation>
        <location evidence="1">Cytoplasm</location>
    </subcellularLocation>
</comment>
<comment type="similarity">
    <text evidence="1">Belongs to the phenylalanyl-tRNA synthetase beta subunit family. Type 1 subfamily.</text>
</comment>
<proteinExistence type="inferred from homology"/>
<evidence type="ECO:0000255" key="1">
    <source>
        <dbReference type="HAMAP-Rule" id="MF_00283"/>
    </source>
</evidence>
<gene>
    <name evidence="1" type="primary">pheT</name>
    <name type="ordered locus">PFL_2116</name>
</gene>
<dbReference type="EC" id="6.1.1.20" evidence="1"/>
<dbReference type="EMBL" id="CP000076">
    <property type="protein sequence ID" value="AAY91391.1"/>
    <property type="molecule type" value="Genomic_DNA"/>
</dbReference>
<dbReference type="RefSeq" id="WP_011060420.1">
    <property type="nucleotide sequence ID" value="NC_004129.6"/>
</dbReference>
<dbReference type="SMR" id="Q4KEV9"/>
<dbReference type="STRING" id="220664.PFL_2116"/>
<dbReference type="KEGG" id="pfl:PFL_2116"/>
<dbReference type="PATRIC" id="fig|220664.5.peg.2145"/>
<dbReference type="eggNOG" id="COG0072">
    <property type="taxonomic scope" value="Bacteria"/>
</dbReference>
<dbReference type="HOGENOM" id="CLU_016891_0_0_6"/>
<dbReference type="Proteomes" id="UP000008540">
    <property type="component" value="Chromosome"/>
</dbReference>
<dbReference type="GO" id="GO:0009328">
    <property type="term" value="C:phenylalanine-tRNA ligase complex"/>
    <property type="evidence" value="ECO:0007669"/>
    <property type="project" value="TreeGrafter"/>
</dbReference>
<dbReference type="GO" id="GO:0005524">
    <property type="term" value="F:ATP binding"/>
    <property type="evidence" value="ECO:0007669"/>
    <property type="project" value="UniProtKB-UniRule"/>
</dbReference>
<dbReference type="GO" id="GO:0000287">
    <property type="term" value="F:magnesium ion binding"/>
    <property type="evidence" value="ECO:0007669"/>
    <property type="project" value="UniProtKB-UniRule"/>
</dbReference>
<dbReference type="GO" id="GO:0004826">
    <property type="term" value="F:phenylalanine-tRNA ligase activity"/>
    <property type="evidence" value="ECO:0007669"/>
    <property type="project" value="UniProtKB-UniRule"/>
</dbReference>
<dbReference type="GO" id="GO:0000049">
    <property type="term" value="F:tRNA binding"/>
    <property type="evidence" value="ECO:0007669"/>
    <property type="project" value="UniProtKB-KW"/>
</dbReference>
<dbReference type="GO" id="GO:0006432">
    <property type="term" value="P:phenylalanyl-tRNA aminoacylation"/>
    <property type="evidence" value="ECO:0007669"/>
    <property type="project" value="UniProtKB-UniRule"/>
</dbReference>
<dbReference type="CDD" id="cd00769">
    <property type="entry name" value="PheRS_beta_core"/>
    <property type="match status" value="1"/>
</dbReference>
<dbReference type="CDD" id="cd02796">
    <property type="entry name" value="tRNA_bind_bactPheRS"/>
    <property type="match status" value="1"/>
</dbReference>
<dbReference type="FunFam" id="2.40.50.140:FF:000045">
    <property type="entry name" value="Phenylalanine--tRNA ligase beta subunit"/>
    <property type="match status" value="1"/>
</dbReference>
<dbReference type="FunFam" id="3.30.56.10:FF:000002">
    <property type="entry name" value="Phenylalanine--tRNA ligase beta subunit"/>
    <property type="match status" value="1"/>
</dbReference>
<dbReference type="FunFam" id="3.30.70.380:FF:000001">
    <property type="entry name" value="Phenylalanine--tRNA ligase beta subunit"/>
    <property type="match status" value="1"/>
</dbReference>
<dbReference type="FunFam" id="3.30.930.10:FF:000022">
    <property type="entry name" value="Phenylalanine--tRNA ligase beta subunit"/>
    <property type="match status" value="1"/>
</dbReference>
<dbReference type="FunFam" id="3.50.40.10:FF:000001">
    <property type="entry name" value="Phenylalanine--tRNA ligase beta subunit"/>
    <property type="match status" value="1"/>
</dbReference>
<dbReference type="Gene3D" id="3.30.56.10">
    <property type="match status" value="2"/>
</dbReference>
<dbReference type="Gene3D" id="3.30.930.10">
    <property type="entry name" value="Bira Bifunctional Protein, Domain 2"/>
    <property type="match status" value="1"/>
</dbReference>
<dbReference type="Gene3D" id="3.30.70.380">
    <property type="entry name" value="Ferrodoxin-fold anticodon-binding domain"/>
    <property type="match status" value="1"/>
</dbReference>
<dbReference type="Gene3D" id="2.40.50.140">
    <property type="entry name" value="Nucleic acid-binding proteins"/>
    <property type="match status" value="1"/>
</dbReference>
<dbReference type="Gene3D" id="3.50.40.10">
    <property type="entry name" value="Phenylalanyl-trna Synthetase, Chain B, domain 3"/>
    <property type="match status" value="1"/>
</dbReference>
<dbReference type="HAMAP" id="MF_00283">
    <property type="entry name" value="Phe_tRNA_synth_beta1"/>
    <property type="match status" value="1"/>
</dbReference>
<dbReference type="InterPro" id="IPR045864">
    <property type="entry name" value="aa-tRNA-synth_II/BPL/LPL"/>
</dbReference>
<dbReference type="InterPro" id="IPR005146">
    <property type="entry name" value="B3/B4_tRNA-bd"/>
</dbReference>
<dbReference type="InterPro" id="IPR009061">
    <property type="entry name" value="DNA-bd_dom_put_sf"/>
</dbReference>
<dbReference type="InterPro" id="IPR005121">
    <property type="entry name" value="Fdx_antiC-bd"/>
</dbReference>
<dbReference type="InterPro" id="IPR036690">
    <property type="entry name" value="Fdx_antiC-bd_sf"/>
</dbReference>
<dbReference type="InterPro" id="IPR012340">
    <property type="entry name" value="NA-bd_OB-fold"/>
</dbReference>
<dbReference type="InterPro" id="IPR045060">
    <property type="entry name" value="Phe-tRNA-ligase_IIc_bsu"/>
</dbReference>
<dbReference type="InterPro" id="IPR004532">
    <property type="entry name" value="Phe-tRNA-ligase_IIc_bsu_bact"/>
</dbReference>
<dbReference type="InterPro" id="IPR020825">
    <property type="entry name" value="Phe-tRNA_synthase-like_B3/B4"/>
</dbReference>
<dbReference type="InterPro" id="IPR041616">
    <property type="entry name" value="PheRS_beta_core"/>
</dbReference>
<dbReference type="InterPro" id="IPR002547">
    <property type="entry name" value="tRNA-bd_dom"/>
</dbReference>
<dbReference type="InterPro" id="IPR033714">
    <property type="entry name" value="tRNA_bind_bactPheRS"/>
</dbReference>
<dbReference type="InterPro" id="IPR005147">
    <property type="entry name" value="tRNA_synthase_B5-dom"/>
</dbReference>
<dbReference type="NCBIfam" id="TIGR00472">
    <property type="entry name" value="pheT_bact"/>
    <property type="match status" value="1"/>
</dbReference>
<dbReference type="NCBIfam" id="NF045760">
    <property type="entry name" value="YtpR"/>
    <property type="match status" value="1"/>
</dbReference>
<dbReference type="PANTHER" id="PTHR10947:SF0">
    <property type="entry name" value="PHENYLALANINE--TRNA LIGASE BETA SUBUNIT"/>
    <property type="match status" value="1"/>
</dbReference>
<dbReference type="PANTHER" id="PTHR10947">
    <property type="entry name" value="PHENYLALANYL-TRNA SYNTHETASE BETA CHAIN AND LEUCINE-RICH REPEAT-CONTAINING PROTEIN 47"/>
    <property type="match status" value="1"/>
</dbReference>
<dbReference type="Pfam" id="PF03483">
    <property type="entry name" value="B3_4"/>
    <property type="match status" value="1"/>
</dbReference>
<dbReference type="Pfam" id="PF03484">
    <property type="entry name" value="B5"/>
    <property type="match status" value="1"/>
</dbReference>
<dbReference type="Pfam" id="PF03147">
    <property type="entry name" value="FDX-ACB"/>
    <property type="match status" value="1"/>
</dbReference>
<dbReference type="Pfam" id="PF01588">
    <property type="entry name" value="tRNA_bind"/>
    <property type="match status" value="1"/>
</dbReference>
<dbReference type="Pfam" id="PF17759">
    <property type="entry name" value="tRNA_synthFbeta"/>
    <property type="match status" value="1"/>
</dbReference>
<dbReference type="SMART" id="SM00873">
    <property type="entry name" value="B3_4"/>
    <property type="match status" value="1"/>
</dbReference>
<dbReference type="SMART" id="SM00874">
    <property type="entry name" value="B5"/>
    <property type="match status" value="1"/>
</dbReference>
<dbReference type="SMART" id="SM00896">
    <property type="entry name" value="FDX-ACB"/>
    <property type="match status" value="1"/>
</dbReference>
<dbReference type="SUPFAM" id="SSF54991">
    <property type="entry name" value="Anticodon-binding domain of PheRS"/>
    <property type="match status" value="1"/>
</dbReference>
<dbReference type="SUPFAM" id="SSF55681">
    <property type="entry name" value="Class II aaRS and biotin synthetases"/>
    <property type="match status" value="1"/>
</dbReference>
<dbReference type="SUPFAM" id="SSF50249">
    <property type="entry name" value="Nucleic acid-binding proteins"/>
    <property type="match status" value="1"/>
</dbReference>
<dbReference type="SUPFAM" id="SSF56037">
    <property type="entry name" value="PheT/TilS domain"/>
    <property type="match status" value="1"/>
</dbReference>
<dbReference type="SUPFAM" id="SSF46955">
    <property type="entry name" value="Putative DNA-binding domain"/>
    <property type="match status" value="1"/>
</dbReference>
<dbReference type="PROSITE" id="PS51483">
    <property type="entry name" value="B5"/>
    <property type="match status" value="1"/>
</dbReference>
<dbReference type="PROSITE" id="PS51447">
    <property type="entry name" value="FDX_ACB"/>
    <property type="match status" value="1"/>
</dbReference>
<dbReference type="PROSITE" id="PS50886">
    <property type="entry name" value="TRBD"/>
    <property type="match status" value="1"/>
</dbReference>
<reference key="1">
    <citation type="journal article" date="2005" name="Nat. Biotechnol.">
        <title>Complete genome sequence of the plant commensal Pseudomonas fluorescens Pf-5.</title>
        <authorList>
            <person name="Paulsen I.T."/>
            <person name="Press C.M."/>
            <person name="Ravel J."/>
            <person name="Kobayashi D.Y."/>
            <person name="Myers G.S.A."/>
            <person name="Mavrodi D.V."/>
            <person name="DeBoy R.T."/>
            <person name="Seshadri R."/>
            <person name="Ren Q."/>
            <person name="Madupu R."/>
            <person name="Dodson R.J."/>
            <person name="Durkin A.S."/>
            <person name="Brinkac L.M."/>
            <person name="Daugherty S.C."/>
            <person name="Sullivan S.A."/>
            <person name="Rosovitz M.J."/>
            <person name="Gwinn M.L."/>
            <person name="Zhou L."/>
            <person name="Schneider D.J."/>
            <person name="Cartinhour S.W."/>
            <person name="Nelson W.C."/>
            <person name="Weidman J."/>
            <person name="Watkins K."/>
            <person name="Tran K."/>
            <person name="Khouri H."/>
            <person name="Pierson E.A."/>
            <person name="Pierson L.S. III"/>
            <person name="Thomashow L.S."/>
            <person name="Loper J.E."/>
        </authorList>
    </citation>
    <scope>NUCLEOTIDE SEQUENCE [LARGE SCALE GENOMIC DNA]</scope>
    <source>
        <strain>ATCC BAA-477 / NRRL B-23932 / Pf-5</strain>
    </source>
</reference>
<name>SYFB_PSEF5</name>